<organism>
    <name type="scientific">Staphylococcus aureus (strain COL)</name>
    <dbReference type="NCBI Taxonomy" id="93062"/>
    <lineage>
        <taxon>Bacteria</taxon>
        <taxon>Bacillati</taxon>
        <taxon>Bacillota</taxon>
        <taxon>Bacilli</taxon>
        <taxon>Bacillales</taxon>
        <taxon>Staphylococcaceae</taxon>
        <taxon>Staphylococcus</taxon>
    </lineage>
</organism>
<comment type="similarity">
    <text evidence="1">Belongs to the UPF0741 family.</text>
</comment>
<proteinExistence type="inferred from homology"/>
<reference key="1">
    <citation type="journal article" date="2005" name="J. Bacteriol.">
        <title>Insights on evolution of virulence and resistance from the complete genome analysis of an early methicillin-resistant Staphylococcus aureus strain and a biofilm-producing methicillin-resistant Staphylococcus epidermidis strain.</title>
        <authorList>
            <person name="Gill S.R."/>
            <person name="Fouts D.E."/>
            <person name="Archer G.L."/>
            <person name="Mongodin E.F."/>
            <person name="DeBoy R.T."/>
            <person name="Ravel J."/>
            <person name="Paulsen I.T."/>
            <person name="Kolonay J.F."/>
            <person name="Brinkac L.M."/>
            <person name="Beanan M.J."/>
            <person name="Dodson R.J."/>
            <person name="Daugherty S.C."/>
            <person name="Madupu R."/>
            <person name="Angiuoli S.V."/>
            <person name="Durkin A.S."/>
            <person name="Haft D.H."/>
            <person name="Vamathevan J.J."/>
            <person name="Khouri H."/>
            <person name="Utterback T.R."/>
            <person name="Lee C."/>
            <person name="Dimitrov G."/>
            <person name="Jiang L."/>
            <person name="Qin H."/>
            <person name="Weidman J."/>
            <person name="Tran K."/>
            <person name="Kang K.H."/>
            <person name="Hance I.R."/>
            <person name="Nelson K.E."/>
            <person name="Fraser C.M."/>
        </authorList>
    </citation>
    <scope>NUCLEOTIDE SEQUENCE [LARGE SCALE GENOMIC DNA]</scope>
    <source>
        <strain>COL</strain>
    </source>
</reference>
<dbReference type="EMBL" id="CP000046">
    <property type="protein sequence ID" value="AAW36330.1"/>
    <property type="molecule type" value="Genomic_DNA"/>
</dbReference>
<dbReference type="RefSeq" id="WP_000798967.1">
    <property type="nucleotide sequence ID" value="NZ_JBGOFO010000005.1"/>
</dbReference>
<dbReference type="SMR" id="Q5HI83"/>
<dbReference type="KEGG" id="sac:SACOL0639"/>
<dbReference type="HOGENOM" id="CLU_2156795_0_0_9"/>
<dbReference type="Proteomes" id="UP000000530">
    <property type="component" value="Chromosome"/>
</dbReference>
<dbReference type="HAMAP" id="MF_01863">
    <property type="entry name" value="UPF0741"/>
    <property type="match status" value="1"/>
</dbReference>
<dbReference type="InterPro" id="IPR009910">
    <property type="entry name" value="DUF1450"/>
</dbReference>
<dbReference type="InterPro" id="IPR020880">
    <property type="entry name" value="UPF0741"/>
</dbReference>
<dbReference type="Pfam" id="PF07293">
    <property type="entry name" value="DUF1450"/>
    <property type="match status" value="1"/>
</dbReference>
<protein>
    <recommendedName>
        <fullName evidence="1">UPF0741 protein SACOL0639</fullName>
    </recommendedName>
</protein>
<accession>Q5HI83</accession>
<feature type="chain" id="PRO_0000372746" description="UPF0741 protein SACOL0639">
    <location>
        <begin position="1"/>
        <end position="113"/>
    </location>
</feature>
<feature type="region of interest" description="Disordered" evidence="2">
    <location>
        <begin position="68"/>
        <end position="113"/>
    </location>
</feature>
<feature type="coiled-coil region" evidence="1">
    <location>
        <begin position="78"/>
        <end position="113"/>
    </location>
</feature>
<feature type="compositionally biased region" description="Basic residues" evidence="2">
    <location>
        <begin position="85"/>
        <end position="94"/>
    </location>
</feature>
<feature type="compositionally biased region" description="Basic and acidic residues" evidence="2">
    <location>
        <begin position="95"/>
        <end position="113"/>
    </location>
</feature>
<evidence type="ECO:0000255" key="1">
    <source>
        <dbReference type="HAMAP-Rule" id="MF_01863"/>
    </source>
</evidence>
<evidence type="ECO:0000256" key="2">
    <source>
        <dbReference type="SAM" id="MobiDB-lite"/>
    </source>
</evidence>
<gene>
    <name type="ordered locus">SACOL0639</name>
</gene>
<sequence length="113" mass="13536">MKNTFLICDECQAVNIRTLQKKLEKLDPDAEIVIGCQSYCGPGRRKTFTFVNNRPLAALTEEELIEKVSQQLKKPRDPEEEERLRKRHEERKRRKEEQDRKLKEKLEKRKAQQ</sequence>
<keyword id="KW-0175">Coiled coil</keyword>
<name>Y639_STAAC</name>